<protein>
    <recommendedName>
        <fullName evidence="1">ATP synthase epsilon chain</fullName>
    </recommendedName>
    <alternativeName>
        <fullName evidence="1">ATP synthase F1 sector epsilon subunit</fullName>
    </alternativeName>
    <alternativeName>
        <fullName evidence="1">F-ATPase epsilon subunit</fullName>
    </alternativeName>
</protein>
<sequence>MAKTQRLDIVTPEKVVFSEEIDFVVAPGADGELGILPEHAPLVTALKVGTLRVQQGGKFFKVAVSGGFMEVKNSRIVVLADTAERADQIDVERAKAAKQRAEQRLNSKGSEIDVHRAEIALHKAINRIKAAE</sequence>
<feature type="chain" id="PRO_1000081730" description="ATP synthase epsilon chain">
    <location>
        <begin position="1"/>
        <end position="132"/>
    </location>
</feature>
<accession>A4J998</accession>
<proteinExistence type="inferred from homology"/>
<comment type="function">
    <text evidence="1">Produces ATP from ADP in the presence of a proton gradient across the membrane.</text>
</comment>
<comment type="subunit">
    <text evidence="1">F-type ATPases have 2 components, CF(1) - the catalytic core - and CF(0) - the membrane proton channel. CF(1) has five subunits: alpha(3), beta(3), gamma(1), delta(1), epsilon(1). CF(0) has three main subunits: a, b and c.</text>
</comment>
<comment type="subcellular location">
    <subcellularLocation>
        <location evidence="1">Cell membrane</location>
        <topology evidence="1">Peripheral membrane protein</topology>
    </subcellularLocation>
</comment>
<comment type="similarity">
    <text evidence="1">Belongs to the ATPase epsilon chain family.</text>
</comment>
<name>ATPE_DESRM</name>
<dbReference type="EMBL" id="CP000612">
    <property type="protein sequence ID" value="ABO51651.1"/>
    <property type="molecule type" value="Genomic_DNA"/>
</dbReference>
<dbReference type="RefSeq" id="WP_011879439.1">
    <property type="nucleotide sequence ID" value="NC_009253.1"/>
</dbReference>
<dbReference type="SMR" id="A4J998"/>
<dbReference type="STRING" id="349161.Dred_3149"/>
<dbReference type="KEGG" id="drm:Dred_3149"/>
<dbReference type="eggNOG" id="COG0355">
    <property type="taxonomic scope" value="Bacteria"/>
</dbReference>
<dbReference type="HOGENOM" id="CLU_084338_1_3_9"/>
<dbReference type="OrthoDB" id="9804110at2"/>
<dbReference type="Proteomes" id="UP000001556">
    <property type="component" value="Chromosome"/>
</dbReference>
<dbReference type="GO" id="GO:0005886">
    <property type="term" value="C:plasma membrane"/>
    <property type="evidence" value="ECO:0007669"/>
    <property type="project" value="UniProtKB-SubCell"/>
</dbReference>
<dbReference type="GO" id="GO:0045259">
    <property type="term" value="C:proton-transporting ATP synthase complex"/>
    <property type="evidence" value="ECO:0007669"/>
    <property type="project" value="UniProtKB-KW"/>
</dbReference>
<dbReference type="GO" id="GO:0005524">
    <property type="term" value="F:ATP binding"/>
    <property type="evidence" value="ECO:0007669"/>
    <property type="project" value="UniProtKB-UniRule"/>
</dbReference>
<dbReference type="GO" id="GO:0046933">
    <property type="term" value="F:proton-transporting ATP synthase activity, rotational mechanism"/>
    <property type="evidence" value="ECO:0007669"/>
    <property type="project" value="UniProtKB-UniRule"/>
</dbReference>
<dbReference type="CDD" id="cd12152">
    <property type="entry name" value="F1-ATPase_delta"/>
    <property type="match status" value="1"/>
</dbReference>
<dbReference type="FunFam" id="1.20.5.440:FF:000001">
    <property type="entry name" value="ATP synthase epsilon chain"/>
    <property type="match status" value="1"/>
</dbReference>
<dbReference type="FunFam" id="2.60.15.10:FF:000001">
    <property type="entry name" value="ATP synthase epsilon chain"/>
    <property type="match status" value="1"/>
</dbReference>
<dbReference type="Gene3D" id="1.20.5.440">
    <property type="entry name" value="ATP synthase delta/epsilon subunit, C-terminal domain"/>
    <property type="match status" value="1"/>
</dbReference>
<dbReference type="Gene3D" id="2.60.15.10">
    <property type="entry name" value="F0F1 ATP synthase delta/epsilon subunit, N-terminal"/>
    <property type="match status" value="1"/>
</dbReference>
<dbReference type="HAMAP" id="MF_00530">
    <property type="entry name" value="ATP_synth_epsil_bac"/>
    <property type="match status" value="1"/>
</dbReference>
<dbReference type="InterPro" id="IPR036794">
    <property type="entry name" value="ATP_F1_dsu/esu_C_sf"/>
</dbReference>
<dbReference type="InterPro" id="IPR001469">
    <property type="entry name" value="ATP_synth_F1_dsu/esu"/>
</dbReference>
<dbReference type="InterPro" id="IPR020546">
    <property type="entry name" value="ATP_synth_F1_dsu/esu_N"/>
</dbReference>
<dbReference type="InterPro" id="IPR020547">
    <property type="entry name" value="ATP_synth_F1_esu_C"/>
</dbReference>
<dbReference type="InterPro" id="IPR036771">
    <property type="entry name" value="ATPsynth_dsu/esu_N"/>
</dbReference>
<dbReference type="NCBIfam" id="TIGR01216">
    <property type="entry name" value="ATP_synt_epsi"/>
    <property type="match status" value="1"/>
</dbReference>
<dbReference type="NCBIfam" id="NF001846">
    <property type="entry name" value="PRK00571.1-3"/>
    <property type="match status" value="1"/>
</dbReference>
<dbReference type="NCBIfam" id="NF009980">
    <property type="entry name" value="PRK13446.1"/>
    <property type="match status" value="1"/>
</dbReference>
<dbReference type="PANTHER" id="PTHR13822">
    <property type="entry name" value="ATP SYNTHASE DELTA/EPSILON CHAIN"/>
    <property type="match status" value="1"/>
</dbReference>
<dbReference type="PANTHER" id="PTHR13822:SF10">
    <property type="entry name" value="ATP SYNTHASE EPSILON CHAIN, CHLOROPLASTIC"/>
    <property type="match status" value="1"/>
</dbReference>
<dbReference type="Pfam" id="PF00401">
    <property type="entry name" value="ATP-synt_DE"/>
    <property type="match status" value="1"/>
</dbReference>
<dbReference type="Pfam" id="PF02823">
    <property type="entry name" value="ATP-synt_DE_N"/>
    <property type="match status" value="1"/>
</dbReference>
<dbReference type="SUPFAM" id="SSF46604">
    <property type="entry name" value="Epsilon subunit of F1F0-ATP synthase C-terminal domain"/>
    <property type="match status" value="1"/>
</dbReference>
<dbReference type="SUPFAM" id="SSF51344">
    <property type="entry name" value="Epsilon subunit of F1F0-ATP synthase N-terminal domain"/>
    <property type="match status" value="1"/>
</dbReference>
<evidence type="ECO:0000255" key="1">
    <source>
        <dbReference type="HAMAP-Rule" id="MF_00530"/>
    </source>
</evidence>
<gene>
    <name evidence="1" type="primary">atpC</name>
    <name type="ordered locus">Dred_3149</name>
</gene>
<reference key="1">
    <citation type="submission" date="2007-03" db="EMBL/GenBank/DDBJ databases">
        <title>Complete sequence of Desulfotomaculum reducens MI-1.</title>
        <authorList>
            <consortium name="US DOE Joint Genome Institute"/>
            <person name="Copeland A."/>
            <person name="Lucas S."/>
            <person name="Lapidus A."/>
            <person name="Barry K."/>
            <person name="Detter J.C."/>
            <person name="Glavina del Rio T."/>
            <person name="Hammon N."/>
            <person name="Israni S."/>
            <person name="Dalin E."/>
            <person name="Tice H."/>
            <person name="Pitluck S."/>
            <person name="Sims D."/>
            <person name="Brettin T."/>
            <person name="Bruce D."/>
            <person name="Han C."/>
            <person name="Tapia R."/>
            <person name="Schmutz J."/>
            <person name="Larimer F."/>
            <person name="Land M."/>
            <person name="Hauser L."/>
            <person name="Kyrpides N."/>
            <person name="Kim E."/>
            <person name="Tebo B.M."/>
            <person name="Richardson P."/>
        </authorList>
    </citation>
    <scope>NUCLEOTIDE SEQUENCE [LARGE SCALE GENOMIC DNA]</scope>
    <source>
        <strain>ATCC BAA-1160 / DSM 100696 / MI-1</strain>
    </source>
</reference>
<organism>
    <name type="scientific">Desulforamulus reducens (strain ATCC BAA-1160 / DSM 100696 / MI-1)</name>
    <name type="common">Desulfotomaculum reducens</name>
    <dbReference type="NCBI Taxonomy" id="349161"/>
    <lineage>
        <taxon>Bacteria</taxon>
        <taxon>Bacillati</taxon>
        <taxon>Bacillota</taxon>
        <taxon>Clostridia</taxon>
        <taxon>Eubacteriales</taxon>
        <taxon>Peptococcaceae</taxon>
        <taxon>Desulforamulus</taxon>
    </lineage>
</organism>
<keyword id="KW-0066">ATP synthesis</keyword>
<keyword id="KW-1003">Cell membrane</keyword>
<keyword id="KW-0139">CF(1)</keyword>
<keyword id="KW-0375">Hydrogen ion transport</keyword>
<keyword id="KW-0406">Ion transport</keyword>
<keyword id="KW-0472">Membrane</keyword>
<keyword id="KW-1185">Reference proteome</keyword>
<keyword id="KW-0813">Transport</keyword>